<evidence type="ECO:0000255" key="1"/>
<evidence type="ECO:0000256" key="2">
    <source>
        <dbReference type="SAM" id="MobiDB-lite"/>
    </source>
</evidence>
<evidence type="ECO:0000269" key="3">
    <source>
    </source>
</evidence>
<evidence type="ECO:0000269" key="4">
    <source>
    </source>
</evidence>
<evidence type="ECO:0000269" key="5">
    <source>
    </source>
</evidence>
<evidence type="ECO:0000269" key="6">
    <source>
    </source>
</evidence>
<evidence type="ECO:0000269" key="7">
    <source>
    </source>
</evidence>
<evidence type="ECO:0000269" key="8">
    <source>
    </source>
</evidence>
<evidence type="ECO:0000269" key="9">
    <source>
    </source>
</evidence>
<evidence type="ECO:0000305" key="10"/>
<sequence length="956" mass="107635">MALKYHQQIISDLLEDSNGGLLILSSGLSLAKLIASLLILHSPSQGTLLLLLSPAAQSLKSRIIHYISSLDSPTPTEITADLPANQRYSLYTSGSPFFITPRILIVDLLTQRIPVSSLAGIFILNAHSISETSTEAFIIRIVKSLNSSAYIRAFSDRPQAMVSGFAKTERTMRALFLRKIHLWPRFQLDVSQELEREPPEVVDIRVSMSNYMVGIQKAIIEVMDACLKEMKKTNKVDVDDLTVESGLFKSFDEIVRRQLDPIWHTLGKRTKQLVSDLKTLRKLLDYLVRYDAVSFLKFLDTLRVSESYRSVWLFAESSYKIFDFAKKRVYRLVKASDVKSKEHVKNKSGKKRNSKGETDSVEAVGGETATNVATGVVVEEVLEEAPKWKVLREILEETQEERLKQAFSEEDNSDNNGIVLVACKDERSCMQLEDCITNNPQKVMREEWEMYLLSKIELRSMQTPQKKKQKTPKGFGILDGVVPVTTIQNSEGSSVGRQEHEALMAAASSIRKLGKTTDMASGNNNPEPHVDKASCTKGKAKKDPTSLRRSLRSCNKKTTNSKPEILPGPENEEKANEASTSAPQEANAVRPSGAKKLPPVHFYALESDQPILDILKPSVIIVYHPDMGFVRELEVYKAENPLRKLKVYFIFYDESTEVQKFEASIRRENEAFESLIRQKSSMIIPVDQDGLCMGSNSSTEFPASSTQNSLTRKAGGRKELEKETQVIVDMREFMSSLPNVLHQKGMKIIPVTLEVGDYILSPSICVERKSIQDLFQSFTSGRLFHQVEMMSRYYRIPVLLIEFSQDKSFSFQSSSDISDDVTPYNIISKLSLLVLHFPRLRLLWSRSLHATAEIFTTLKSNQDEPDETRAIRVGVPSEEGIIENDIRAENYNTSAVEFLRRLPGVSDANYRSIMEKCKSLAELASLPVETLAELMGGHKVAKSLREFLDAKYPTLL</sequence>
<accession>Q9LKI5</accession>
<accession>Q9SE36</accession>
<accession>Q9SPL7</accession>
<organism>
    <name type="scientific">Arabidopsis thaliana</name>
    <name type="common">Mouse-ear cress</name>
    <dbReference type="NCBI Taxonomy" id="3702"/>
    <lineage>
        <taxon>Eukaryota</taxon>
        <taxon>Viridiplantae</taxon>
        <taxon>Streptophyta</taxon>
        <taxon>Embryophyta</taxon>
        <taxon>Tracheophyta</taxon>
        <taxon>Spermatophyta</taxon>
        <taxon>Magnoliopsida</taxon>
        <taxon>eudicotyledons</taxon>
        <taxon>Gunneridae</taxon>
        <taxon>Pentapetalae</taxon>
        <taxon>rosids</taxon>
        <taxon>malvids</taxon>
        <taxon>Brassicales</taxon>
        <taxon>Brassicaceae</taxon>
        <taxon>Camelineae</taxon>
        <taxon>Arabidopsis</taxon>
    </lineage>
</organism>
<name>XPF_ARATH</name>
<proteinExistence type="evidence at protein level"/>
<gene>
    <name type="primary">UVH1</name>
    <name type="synonym">RAD1</name>
    <name type="ordered locus">At5g41150</name>
    <name type="ORF">MEE6.22</name>
</gene>
<dbReference type="EC" id="3.1.-.-"/>
<dbReference type="EMBL" id="AF089003">
    <property type="protein sequence ID" value="AAG42948.1"/>
    <property type="molecule type" value="mRNA"/>
</dbReference>
<dbReference type="EMBL" id="AF160500">
    <property type="protein sequence ID" value="AAF01274.1"/>
    <property type="molecule type" value="mRNA"/>
</dbReference>
<dbReference type="EMBL" id="AF277377">
    <property type="protein sequence ID" value="AAF81910.1"/>
    <property type="molecule type" value="Genomic_DNA"/>
</dbReference>
<dbReference type="EMBL" id="AB010072">
    <property type="protein sequence ID" value="BAB09717.1"/>
    <property type="molecule type" value="Genomic_DNA"/>
</dbReference>
<dbReference type="EMBL" id="CP002688">
    <property type="protein sequence ID" value="AED94647.1"/>
    <property type="molecule type" value="Genomic_DNA"/>
</dbReference>
<dbReference type="EMBL" id="AY140076">
    <property type="protein sequence ID" value="AAM98217.1"/>
    <property type="molecule type" value="mRNA"/>
</dbReference>
<dbReference type="EMBL" id="AF191494">
    <property type="protein sequence ID" value="AAF14584.1"/>
    <property type="molecule type" value="mRNA"/>
</dbReference>
<dbReference type="RefSeq" id="NP_198931.1">
    <molecule id="Q9LKI5-1"/>
    <property type="nucleotide sequence ID" value="NM_123480.4"/>
</dbReference>
<dbReference type="SMR" id="Q9LKI5"/>
<dbReference type="FunCoup" id="Q9LKI5">
    <property type="interactions" value="4003"/>
</dbReference>
<dbReference type="STRING" id="3702.Q9LKI5"/>
<dbReference type="PaxDb" id="3702-AT5G41150.1"/>
<dbReference type="ProteomicsDB" id="242511">
    <molecule id="Q9LKI5-1"/>
</dbReference>
<dbReference type="EnsemblPlants" id="AT5G41150.1">
    <molecule id="Q9LKI5-1"/>
    <property type="protein sequence ID" value="AT5G41150.1"/>
    <property type="gene ID" value="AT5G41150"/>
</dbReference>
<dbReference type="GeneID" id="834117"/>
<dbReference type="Gramene" id="AT5G41150.1">
    <molecule id="Q9LKI5-1"/>
    <property type="protein sequence ID" value="AT5G41150.1"/>
    <property type="gene ID" value="AT5G41150"/>
</dbReference>
<dbReference type="KEGG" id="ath:AT5G41150"/>
<dbReference type="Araport" id="AT5G41150"/>
<dbReference type="TAIR" id="AT5G41150">
    <property type="gene designation" value="UVH1"/>
</dbReference>
<dbReference type="eggNOG" id="KOG0442">
    <property type="taxonomic scope" value="Eukaryota"/>
</dbReference>
<dbReference type="HOGENOM" id="CLU_002265_2_0_1"/>
<dbReference type="InParanoid" id="Q9LKI5"/>
<dbReference type="OMA" id="THILDIM"/>
<dbReference type="OrthoDB" id="361020at2759"/>
<dbReference type="PhylomeDB" id="Q9LKI5"/>
<dbReference type="PRO" id="PR:Q9LKI5"/>
<dbReference type="Proteomes" id="UP000006548">
    <property type="component" value="Chromosome 5"/>
</dbReference>
<dbReference type="ExpressionAtlas" id="Q9LKI5">
    <property type="expression patterns" value="baseline and differential"/>
</dbReference>
<dbReference type="GO" id="GO:0005634">
    <property type="term" value="C:nucleus"/>
    <property type="evidence" value="ECO:0007669"/>
    <property type="project" value="UniProtKB-SubCell"/>
</dbReference>
<dbReference type="GO" id="GO:0003677">
    <property type="term" value="F:DNA binding"/>
    <property type="evidence" value="ECO:0007669"/>
    <property type="project" value="UniProtKB-KW"/>
</dbReference>
<dbReference type="GO" id="GO:0000014">
    <property type="term" value="F:single-stranded DNA endodeoxyribonuclease activity"/>
    <property type="evidence" value="ECO:0000315"/>
    <property type="project" value="TAIR"/>
</dbReference>
<dbReference type="GO" id="GO:0006281">
    <property type="term" value="P:DNA repair"/>
    <property type="evidence" value="ECO:0000270"/>
    <property type="project" value="TAIR"/>
</dbReference>
<dbReference type="GO" id="GO:0000724">
    <property type="term" value="P:double-strand break repair via homologous recombination"/>
    <property type="evidence" value="ECO:0000315"/>
    <property type="project" value="TAIR"/>
</dbReference>
<dbReference type="GO" id="GO:0006289">
    <property type="term" value="P:nucleotide-excision repair"/>
    <property type="evidence" value="ECO:0000315"/>
    <property type="project" value="TAIR"/>
</dbReference>
<dbReference type="GO" id="GO:0000720">
    <property type="term" value="P:pyrimidine dimer repair by nucleotide-excision repair"/>
    <property type="evidence" value="ECO:0000315"/>
    <property type="project" value="CACAO"/>
</dbReference>
<dbReference type="GO" id="GO:0006979">
    <property type="term" value="P:response to oxidative stress"/>
    <property type="evidence" value="ECO:0000315"/>
    <property type="project" value="TAIR"/>
</dbReference>
<dbReference type="GO" id="GO:0009314">
    <property type="term" value="P:response to radiation"/>
    <property type="evidence" value="ECO:0000270"/>
    <property type="project" value="TAIR"/>
</dbReference>
<dbReference type="CDD" id="cd20078">
    <property type="entry name" value="XPF_nuclease_XPF_euk"/>
    <property type="match status" value="1"/>
</dbReference>
<dbReference type="FunFam" id="1.10.150.20:FF:000038">
    <property type="entry name" value="DNA repair endonuclease UVH1"/>
    <property type="match status" value="1"/>
</dbReference>
<dbReference type="FunFam" id="3.40.50.10130:FF:000002">
    <property type="entry name" value="DNA repair endonuclease XPF"/>
    <property type="match status" value="1"/>
</dbReference>
<dbReference type="Gene3D" id="3.40.50.10130">
    <property type="match status" value="1"/>
</dbReference>
<dbReference type="Gene3D" id="1.10.150.20">
    <property type="entry name" value="5' to 3' exonuclease, C-terminal subdomain"/>
    <property type="match status" value="1"/>
</dbReference>
<dbReference type="InterPro" id="IPR006166">
    <property type="entry name" value="ERCC4_domain"/>
</dbReference>
<dbReference type="InterPro" id="IPR011335">
    <property type="entry name" value="Restrct_endonuc-II-like"/>
</dbReference>
<dbReference type="InterPro" id="IPR010994">
    <property type="entry name" value="RuvA_2-like"/>
</dbReference>
<dbReference type="InterPro" id="IPR047520">
    <property type="entry name" value="XPF_nuclease"/>
</dbReference>
<dbReference type="PANTHER" id="PTHR10150">
    <property type="entry name" value="DNA REPAIR ENDONUCLEASE XPF"/>
    <property type="match status" value="1"/>
</dbReference>
<dbReference type="PANTHER" id="PTHR10150:SF0">
    <property type="entry name" value="DNA REPAIR ENDONUCLEASE XPF"/>
    <property type="match status" value="1"/>
</dbReference>
<dbReference type="Pfam" id="PF02732">
    <property type="entry name" value="ERCC4"/>
    <property type="match status" value="1"/>
</dbReference>
<dbReference type="SMART" id="SM00891">
    <property type="entry name" value="ERCC4"/>
    <property type="match status" value="1"/>
</dbReference>
<dbReference type="SUPFAM" id="SSF52980">
    <property type="entry name" value="Restriction endonuclease-like"/>
    <property type="match status" value="1"/>
</dbReference>
<dbReference type="SUPFAM" id="SSF47781">
    <property type="entry name" value="RuvA domain 2-like"/>
    <property type="match status" value="1"/>
</dbReference>
<protein>
    <recommendedName>
        <fullName>DNA repair endonuclease UVH1</fullName>
        <ecNumber>3.1.-.-</ecNumber>
    </recommendedName>
    <alternativeName>
        <fullName>DNA excision repair protein XP-F homolog</fullName>
    </alternativeName>
    <alternativeName>
        <fullName>Ultraviolet hypersensitive 1</fullName>
        <shortName>AtRAD1</shortName>
    </alternativeName>
</protein>
<feature type="chain" id="PRO_0000198862" description="DNA repair endonuclease UVH1">
    <location>
        <begin position="1"/>
        <end position="956"/>
    </location>
</feature>
<feature type="domain" description="ERCC4">
    <location>
        <begin position="725"/>
        <end position="805"/>
    </location>
</feature>
<feature type="region of interest" description="Disordered" evidence="2">
    <location>
        <begin position="343"/>
        <end position="363"/>
    </location>
</feature>
<feature type="region of interest" description="Disordered" evidence="2">
    <location>
        <begin position="516"/>
        <end position="593"/>
    </location>
</feature>
<feature type="region of interest" description="Disordered" evidence="2">
    <location>
        <begin position="697"/>
        <end position="718"/>
    </location>
</feature>
<feature type="short sequence motif" description="Nuclear localization signal" evidence="1">
    <location>
        <begin position="256"/>
        <end position="272"/>
    </location>
</feature>
<feature type="compositionally biased region" description="Polar residues" evidence="2">
    <location>
        <begin position="697"/>
        <end position="711"/>
    </location>
</feature>
<feature type="splice variant" id="VSP_011871" description="In isoform 2." evidence="10">
    <original>DGLCMGSNSSTEFPASSTQNSLTRKAGGRKELEKETQVI</original>
    <variation>FLFPAFFSSILCYKLGIRMGSAWGRILLQSFQLGVHKTH</variation>
    <location>
        <begin position="689"/>
        <end position="727"/>
    </location>
</feature>
<feature type="splice variant" id="VSP_011872" description="In isoform 2." evidence="10">
    <location>
        <begin position="728"/>
        <end position="956"/>
    </location>
</feature>
<feature type="splice variant" id="VSP_011873" description="In isoform 3." evidence="10">
    <original>GRL</original>
    <variation>VFE</variation>
    <location>
        <begin position="781"/>
        <end position="783"/>
    </location>
</feature>
<feature type="splice variant" id="VSP_011874" description="In isoform 3." evidence="10">
    <location>
        <begin position="784"/>
        <end position="956"/>
    </location>
</feature>
<feature type="mutagenesis site" description="Loss of DNA repair activity." evidence="5">
    <original>G</original>
    <variation>D</variation>
    <location>
        <position position="756"/>
    </location>
</feature>
<feature type="sequence conflict" description="In Ref. 3; AAF81910." evidence="10" ref="3">
    <original>L</original>
    <variation>V</variation>
    <location>
        <position position="22"/>
    </location>
</feature>
<feature type="sequence conflict" description="In Ref. 3; AAF81910." evidence="10" ref="3">
    <original>S</original>
    <variation>A</variation>
    <location>
        <position position="117"/>
    </location>
</feature>
<feature type="sequence conflict" description="In Ref. 3; AAF81910." evidence="10" ref="3">
    <original>S</original>
    <variation>G</variation>
    <location>
        <position position="147"/>
    </location>
</feature>
<feature type="sequence conflict" description="In Ref. 7; AAF14584." evidence="10" ref="7">
    <original>D</original>
    <variation>G</variation>
    <location>
        <position position="434"/>
    </location>
</feature>
<feature type="sequence conflict" description="In Ref. 3; AAF81910." evidence="10" ref="3">
    <original>P</original>
    <variation>L</variation>
    <location>
        <position position="544"/>
    </location>
</feature>
<feature type="sequence conflict" description="In Ref. 3; AAF81910." evidence="10" ref="3">
    <original>R</original>
    <variation>Q</variation>
    <location>
        <position position="548"/>
    </location>
</feature>
<feature type="sequence conflict" description="In Ref. 3; AAF81910." evidence="10" ref="3">
    <original>T</original>
    <variation>A</variation>
    <location>
        <position position="559"/>
    </location>
</feature>
<feature type="sequence conflict" description="In Ref. 3; AAF81910." evidence="10" ref="3">
    <original>L</original>
    <variation>V</variation>
    <location>
        <position position="720"/>
    </location>
</feature>
<feature type="sequence conflict" description="In Ref. 3; AAF81910." evidence="10" ref="3">
    <original>F</original>
    <variation>S</variation>
    <location>
        <position position="837"/>
    </location>
</feature>
<comment type="function">
    <text evidence="3 4 5 6 7 8 9">Seems to be involved in nucleotide excision repair (NER) of damaged DNA (dark repair mechanism). Involved in repair of UV light, and probably oxidative damage. The UVH1/RAD1-ERCC1/RAD10 complex may act as an endonuclease making DNA incision 5' to the lesion site. In vitro, is implicated in double strand breaks (DSBs) repair and is required for homologous recombination in the presence of non-homologous overhangs. May mediate the induction of a DNA-damage sensitive cell-cycle checkpoint during the G2 phase.</text>
</comment>
<comment type="subunit">
    <text evidence="10">Heterodimer with ERCC1/RAD10.</text>
</comment>
<comment type="subcellular location">
    <subcellularLocation>
        <location evidence="10">Nucleus</location>
    </subcellularLocation>
</comment>
<comment type="alternative products">
    <event type="alternative splicing"/>
    <isoform>
        <id>Q9LKI5-1</id>
        <name>1</name>
        <name>AtRAD1-1</name>
        <sequence type="displayed"/>
    </isoform>
    <isoform>
        <id>Q9LKI5-2</id>
        <name>2</name>
        <name>AtRAD1-2</name>
        <name>AtRAD1-4</name>
        <sequence type="described" ref="VSP_011871 VSP_011872"/>
    </isoform>
    <isoform>
        <id>Q9LKI5-3</id>
        <name>3</name>
        <name>AtRAD1-3</name>
        <sequence type="described" ref="VSP_011873 VSP_011874"/>
    </isoform>
</comment>
<comment type="tissue specificity">
    <text evidence="3 4">Isoform 1 and isoform 2 are widely expressed, predominantly in flowers, meristems and stems. Isoform 3 is detected at low levels.</text>
</comment>
<comment type="miscellaneous">
    <molecule>Isoform 2</molecule>
    <text evidence="10">Inactive.</text>
</comment>
<comment type="miscellaneous">
    <molecule>Isoform 3</molecule>
    <text evidence="10">Inactive.</text>
</comment>
<comment type="similarity">
    <text evidence="10">Belongs to the XPF family.</text>
</comment>
<reference key="1">
    <citation type="journal article" date="2000" name="Plant J.">
        <title>AtRAD1, a plant homologue of human and yeast nucleotide excision repair endonucleases, is involved in dark repair of UV damages and recombination.</title>
        <authorList>
            <person name="Gallego F."/>
            <person name="Fleck O."/>
            <person name="Li A."/>
            <person name="Wyrzykowska J."/>
            <person name="Tinland B."/>
        </authorList>
    </citation>
    <scope>NUCLEOTIDE SEQUENCE [MRNA] (ISOFORM 1)</scope>
    <scope>FUNCTION</scope>
    <scope>TISSUE SPECIFICITY</scope>
    <source>
        <strain>cv. Columbia</strain>
    </source>
</reference>
<reference key="2">
    <citation type="journal article" date="2000" name="Plant J.">
        <title>Repair of UV damage in plants by nucleotide excision repair: Arabidopsis UVH1 DNA repair gene is a homolog of Saccharomyces cerevisiae Rad1.</title>
        <authorList>
            <person name="Liu Z."/>
            <person name="Hossain G.S."/>
            <person name="Islas-Osuna M.A."/>
            <person name="Mitchell D.L."/>
            <person name="Mount D.W."/>
        </authorList>
    </citation>
    <scope>NUCLEOTIDE SEQUENCE [MRNA] (ISOFORM 1)</scope>
    <scope>FUNCTION</scope>
    <scope>TISSUE SPECIFICITY</scope>
    <source>
        <strain>cv. Columbia</strain>
    </source>
</reference>
<reference key="3">
    <citation type="journal article" date="2000" name="Plant Physiol.">
        <title>The Arabidopsis UVH1 gene is a homolog of the yeast repair endonuclease RAD1.</title>
        <authorList>
            <person name="Fidantsef A.L."/>
            <person name="Mitchell D.L."/>
            <person name="Britt A.B."/>
        </authorList>
    </citation>
    <scope>NUCLEOTIDE SEQUENCE [GENOMIC DNA]</scope>
    <scope>FUNCTION</scope>
    <scope>MUTAGENESIS OF GLY-756</scope>
    <source>
        <strain>cv. Landsberg erecta</strain>
    </source>
</reference>
<reference key="4">
    <citation type="journal article" date="1998" name="DNA Res.">
        <title>Structural analysis of Arabidopsis thaliana chromosome 5. IV. Sequence features of the regions of 1,456,315 bp covered by nineteen physically assigned P1 and TAC clones.</title>
        <authorList>
            <person name="Sato S."/>
            <person name="Kaneko T."/>
            <person name="Kotani H."/>
            <person name="Nakamura Y."/>
            <person name="Asamizu E."/>
            <person name="Miyajima N."/>
            <person name="Tabata S."/>
        </authorList>
    </citation>
    <scope>NUCLEOTIDE SEQUENCE [LARGE SCALE GENOMIC DNA]</scope>
    <source>
        <strain>cv. Columbia</strain>
    </source>
</reference>
<reference key="5">
    <citation type="journal article" date="2017" name="Plant J.">
        <title>Araport11: a complete reannotation of the Arabidopsis thaliana reference genome.</title>
        <authorList>
            <person name="Cheng C.Y."/>
            <person name="Krishnakumar V."/>
            <person name="Chan A.P."/>
            <person name="Thibaud-Nissen F."/>
            <person name="Schobel S."/>
            <person name="Town C.D."/>
        </authorList>
    </citation>
    <scope>GENOME REANNOTATION</scope>
    <source>
        <strain>cv. Columbia</strain>
    </source>
</reference>
<reference key="6">
    <citation type="journal article" date="2003" name="Science">
        <title>Empirical analysis of transcriptional activity in the Arabidopsis genome.</title>
        <authorList>
            <person name="Yamada K."/>
            <person name="Lim J."/>
            <person name="Dale J.M."/>
            <person name="Chen H."/>
            <person name="Shinn P."/>
            <person name="Palm C.J."/>
            <person name="Southwick A.M."/>
            <person name="Wu H.C."/>
            <person name="Kim C.J."/>
            <person name="Nguyen M."/>
            <person name="Pham P.K."/>
            <person name="Cheuk R.F."/>
            <person name="Karlin-Newmann G."/>
            <person name="Liu S.X."/>
            <person name="Lam B."/>
            <person name="Sakano H."/>
            <person name="Wu T."/>
            <person name="Yu G."/>
            <person name="Miranda M."/>
            <person name="Quach H.L."/>
            <person name="Tripp M."/>
            <person name="Chang C.H."/>
            <person name="Lee J.M."/>
            <person name="Toriumi M.J."/>
            <person name="Chan M.M."/>
            <person name="Tang C.C."/>
            <person name="Onodera C.S."/>
            <person name="Deng J.M."/>
            <person name="Akiyama K."/>
            <person name="Ansari Y."/>
            <person name="Arakawa T."/>
            <person name="Banh J."/>
            <person name="Banno F."/>
            <person name="Bowser L."/>
            <person name="Brooks S.Y."/>
            <person name="Carninci P."/>
            <person name="Chao Q."/>
            <person name="Choy N."/>
            <person name="Enju A."/>
            <person name="Goldsmith A.D."/>
            <person name="Gurjal M."/>
            <person name="Hansen N.F."/>
            <person name="Hayashizaki Y."/>
            <person name="Johnson-Hopson C."/>
            <person name="Hsuan V.W."/>
            <person name="Iida K."/>
            <person name="Karnes M."/>
            <person name="Khan S."/>
            <person name="Koesema E."/>
            <person name="Ishida J."/>
            <person name="Jiang P.X."/>
            <person name="Jones T."/>
            <person name="Kawai J."/>
            <person name="Kamiya A."/>
            <person name="Meyers C."/>
            <person name="Nakajima M."/>
            <person name="Narusaka M."/>
            <person name="Seki M."/>
            <person name="Sakurai T."/>
            <person name="Satou M."/>
            <person name="Tamse R."/>
            <person name="Vaysberg M."/>
            <person name="Wallender E.K."/>
            <person name="Wong C."/>
            <person name="Yamamura Y."/>
            <person name="Yuan S."/>
            <person name="Shinozaki K."/>
            <person name="Davis R.W."/>
            <person name="Theologis A."/>
            <person name="Ecker J.R."/>
        </authorList>
    </citation>
    <scope>NUCLEOTIDE SEQUENCE [LARGE SCALE MRNA] (ISOFORM 1)</scope>
    <source>
        <strain>cv. Columbia</strain>
    </source>
</reference>
<reference key="7">
    <citation type="journal article" date="2002" name="Gene">
        <title>Detection of Arabidopsis thaliana AtRAD1 cDNA variants and assessment of function by expression in a yeast rad1 mutant.</title>
        <authorList>
            <person name="Vonarx E.J."/>
            <person name="Howlett N.G."/>
            <person name="Schiestl R.H."/>
            <person name="Kunz B.A."/>
        </authorList>
    </citation>
    <scope>NUCLEOTIDE SEQUENCE [MRNA] OF 1-688</scope>
    <scope>FUNCTION</scope>
    <scope>ALTERNATIVE SPLICING</scope>
</reference>
<reference key="8">
    <citation type="journal article" date="2002" name="EMBO Rep.">
        <title>Role of the AtRad1p endonuclease in homologous recombination in plants.</title>
        <authorList>
            <person name="Dubest S."/>
            <person name="Gallego M.E."/>
            <person name="White C.I."/>
        </authorList>
    </citation>
    <scope>FUNCTION</scope>
</reference>
<reference key="9">
    <citation type="journal article" date="2002" name="Plant Cell">
        <title>Repair of damaged DNA by Arabidopsis cell extract.</title>
        <authorList>
            <person name="Li A."/>
            <person name="Schuermann D."/>
            <person name="Gallego F."/>
            <person name="Kovalchuk I."/>
            <person name="Tinland B."/>
        </authorList>
    </citation>
    <scope>FUNCTION</scope>
</reference>
<reference key="10">
    <citation type="journal article" date="2003" name="J. Exp. Bot.">
        <title>Arabidopsis mutants sensitive to gamma radiation include the homologue of the human repair gene ERCC1.</title>
        <authorList>
            <person name="Hefner E."/>
            <person name="Preuss S.B."/>
            <person name="Britt A.B."/>
        </authorList>
    </citation>
    <scope>FUNCTION</scope>
</reference>
<keyword id="KW-0025">Alternative splicing</keyword>
<keyword id="KW-0227">DNA damage</keyword>
<keyword id="KW-0228">DNA excision</keyword>
<keyword id="KW-0233">DNA recombination</keyword>
<keyword id="KW-0234">DNA repair</keyword>
<keyword id="KW-0238">DNA-binding</keyword>
<keyword id="KW-0255">Endonuclease</keyword>
<keyword id="KW-0378">Hydrolase</keyword>
<keyword id="KW-0540">Nuclease</keyword>
<keyword id="KW-0539">Nucleus</keyword>
<keyword id="KW-1185">Reference proteome</keyword>